<organism>
    <name type="scientific">Pyrobaculum neutrophilum (strain DSM 2338 / JCM 9278 / NBRC 100436 / V24Sta)</name>
    <name type="common">Thermoproteus neutrophilus</name>
    <dbReference type="NCBI Taxonomy" id="444157"/>
    <lineage>
        <taxon>Archaea</taxon>
        <taxon>Thermoproteota</taxon>
        <taxon>Thermoprotei</taxon>
        <taxon>Thermoproteales</taxon>
        <taxon>Thermoproteaceae</taxon>
        <taxon>Pyrobaculum</taxon>
    </lineage>
</organism>
<comment type="function">
    <text evidence="1">Catalyzes the formation of 6,7-dimethyl-8-ribityllumazine by condensation of 5-amino-6-(D-ribitylamino)uracil with 3,4-dihydroxy-2-butanone 4-phosphate. This is the penultimate step in the biosynthesis of riboflavin.</text>
</comment>
<comment type="catalytic activity">
    <reaction evidence="1">
        <text>(2S)-2-hydroxy-3-oxobutyl phosphate + 5-amino-6-(D-ribitylamino)uracil = 6,7-dimethyl-8-(1-D-ribityl)lumazine + phosphate + 2 H2O + H(+)</text>
        <dbReference type="Rhea" id="RHEA:26152"/>
        <dbReference type="ChEBI" id="CHEBI:15377"/>
        <dbReference type="ChEBI" id="CHEBI:15378"/>
        <dbReference type="ChEBI" id="CHEBI:15934"/>
        <dbReference type="ChEBI" id="CHEBI:43474"/>
        <dbReference type="ChEBI" id="CHEBI:58201"/>
        <dbReference type="ChEBI" id="CHEBI:58830"/>
        <dbReference type="EC" id="2.5.1.78"/>
    </reaction>
</comment>
<comment type="pathway">
    <text evidence="1">Cofactor biosynthesis; riboflavin biosynthesis; riboflavin from 2-hydroxy-3-oxobutyl phosphate and 5-amino-6-(D-ribitylamino)uracil: step 1/2.</text>
</comment>
<comment type="similarity">
    <text evidence="1">Belongs to the DMRL synthase family.</text>
</comment>
<reference key="1">
    <citation type="submission" date="2008-03" db="EMBL/GenBank/DDBJ databases">
        <title>Complete sequence of Thermoproteus neutrophilus V24Sta.</title>
        <authorList>
            <consortium name="US DOE Joint Genome Institute"/>
            <person name="Copeland A."/>
            <person name="Lucas S."/>
            <person name="Lapidus A."/>
            <person name="Glavina del Rio T."/>
            <person name="Dalin E."/>
            <person name="Tice H."/>
            <person name="Bruce D."/>
            <person name="Goodwin L."/>
            <person name="Pitluck S."/>
            <person name="Sims D."/>
            <person name="Brettin T."/>
            <person name="Detter J.C."/>
            <person name="Han C."/>
            <person name="Kuske C.R."/>
            <person name="Schmutz J."/>
            <person name="Larimer F."/>
            <person name="Land M."/>
            <person name="Hauser L."/>
            <person name="Kyrpides N."/>
            <person name="Mikhailova N."/>
            <person name="Biddle J.F."/>
            <person name="Zhang Z."/>
            <person name="Fitz-Gibbon S.T."/>
            <person name="Lowe T.M."/>
            <person name="Saltikov C."/>
            <person name="House C.H."/>
            <person name="Richardson P."/>
        </authorList>
    </citation>
    <scope>NUCLEOTIDE SEQUENCE [LARGE SCALE GENOMIC DNA]</scope>
    <source>
        <strain>DSM 2338 / JCM 9278 / NBRC 100436 / V24Sta</strain>
    </source>
</reference>
<feature type="chain" id="PRO_1000098241" description="6,7-dimethyl-8-ribityllumazine synthase">
    <location>
        <begin position="1"/>
        <end position="150"/>
    </location>
</feature>
<feature type="active site" description="Proton donor" evidence="1">
    <location>
        <position position="75"/>
    </location>
</feature>
<feature type="binding site" evidence="1">
    <location>
        <position position="11"/>
    </location>
    <ligand>
        <name>5-amino-6-(D-ribitylamino)uracil</name>
        <dbReference type="ChEBI" id="CHEBI:15934"/>
    </ligand>
</feature>
<feature type="binding site" evidence="1">
    <location>
        <begin position="43"/>
        <end position="45"/>
    </location>
    <ligand>
        <name>5-amino-6-(D-ribitylamino)uracil</name>
        <dbReference type="ChEBI" id="CHEBI:15934"/>
    </ligand>
</feature>
<feature type="binding site" evidence="1">
    <location>
        <begin position="67"/>
        <end position="69"/>
    </location>
    <ligand>
        <name>5-amino-6-(D-ribitylamino)uracil</name>
        <dbReference type="ChEBI" id="CHEBI:15934"/>
    </ligand>
</feature>
<feature type="binding site" evidence="1">
    <location>
        <begin position="72"/>
        <end position="73"/>
    </location>
    <ligand>
        <name>(2S)-2-hydroxy-3-oxobutyl phosphate</name>
        <dbReference type="ChEBI" id="CHEBI:58830"/>
    </ligand>
</feature>
<feature type="binding site" evidence="1">
    <location>
        <position position="100"/>
    </location>
    <ligand>
        <name>5-amino-6-(D-ribitylamino)uracil</name>
        <dbReference type="ChEBI" id="CHEBI:15934"/>
    </ligand>
</feature>
<feature type="binding site" evidence="1">
    <location>
        <position position="115"/>
    </location>
    <ligand>
        <name>(2S)-2-hydroxy-3-oxobutyl phosphate</name>
        <dbReference type="ChEBI" id="CHEBI:58830"/>
    </ligand>
</feature>
<protein>
    <recommendedName>
        <fullName evidence="1">6,7-dimethyl-8-ribityllumazine synthase</fullName>
        <shortName evidence="1">DMRL synthase</shortName>
        <shortName evidence="1">LS</shortName>
        <shortName evidence="1">Lumazine synthase</shortName>
        <ecNumber evidence="1">2.5.1.78</ecNumber>
    </recommendedName>
</protein>
<gene>
    <name evidence="1" type="primary">ribH</name>
    <name type="ordered locus">Tneu_1540</name>
</gene>
<dbReference type="EC" id="2.5.1.78" evidence="1"/>
<dbReference type="EMBL" id="CP001014">
    <property type="protein sequence ID" value="ACB40464.1"/>
    <property type="molecule type" value="Genomic_DNA"/>
</dbReference>
<dbReference type="RefSeq" id="WP_012350883.1">
    <property type="nucleotide sequence ID" value="NC_010525.1"/>
</dbReference>
<dbReference type="SMR" id="B1Y9N5"/>
<dbReference type="STRING" id="444157.Tneu_1540"/>
<dbReference type="GeneID" id="6164826"/>
<dbReference type="KEGG" id="tne:Tneu_1540"/>
<dbReference type="eggNOG" id="arCOG01323">
    <property type="taxonomic scope" value="Archaea"/>
</dbReference>
<dbReference type="HOGENOM" id="CLU_089358_3_1_2"/>
<dbReference type="OrthoDB" id="7610at2157"/>
<dbReference type="UniPathway" id="UPA00275">
    <property type="reaction ID" value="UER00404"/>
</dbReference>
<dbReference type="Proteomes" id="UP000001694">
    <property type="component" value="Chromosome"/>
</dbReference>
<dbReference type="GO" id="GO:0009349">
    <property type="term" value="C:riboflavin synthase complex"/>
    <property type="evidence" value="ECO:0007669"/>
    <property type="project" value="InterPro"/>
</dbReference>
<dbReference type="GO" id="GO:0000906">
    <property type="term" value="F:6,7-dimethyl-8-ribityllumazine synthase activity"/>
    <property type="evidence" value="ECO:0007669"/>
    <property type="project" value="UniProtKB-UniRule"/>
</dbReference>
<dbReference type="GO" id="GO:0009231">
    <property type="term" value="P:riboflavin biosynthetic process"/>
    <property type="evidence" value="ECO:0007669"/>
    <property type="project" value="UniProtKB-UniRule"/>
</dbReference>
<dbReference type="CDD" id="cd09211">
    <property type="entry name" value="Lumazine_synthase_archaeal"/>
    <property type="match status" value="1"/>
</dbReference>
<dbReference type="FunFam" id="3.40.50.960:FF:000003">
    <property type="entry name" value="6,7-dimethyl-8-ribityllumazine synthase"/>
    <property type="match status" value="1"/>
</dbReference>
<dbReference type="Gene3D" id="3.40.50.960">
    <property type="entry name" value="Lumazine/riboflavin synthase"/>
    <property type="match status" value="1"/>
</dbReference>
<dbReference type="HAMAP" id="MF_00178">
    <property type="entry name" value="Lumazine_synth"/>
    <property type="match status" value="1"/>
</dbReference>
<dbReference type="InterPro" id="IPR034964">
    <property type="entry name" value="LS"/>
</dbReference>
<dbReference type="InterPro" id="IPR002180">
    <property type="entry name" value="LS/RS"/>
</dbReference>
<dbReference type="InterPro" id="IPR036467">
    <property type="entry name" value="LS/RS_sf"/>
</dbReference>
<dbReference type="NCBIfam" id="TIGR00114">
    <property type="entry name" value="lumazine-synth"/>
    <property type="match status" value="1"/>
</dbReference>
<dbReference type="PANTHER" id="PTHR21058:SF0">
    <property type="entry name" value="6,7-DIMETHYL-8-RIBITYLLUMAZINE SYNTHASE"/>
    <property type="match status" value="1"/>
</dbReference>
<dbReference type="PANTHER" id="PTHR21058">
    <property type="entry name" value="6,7-DIMETHYL-8-RIBITYLLUMAZINE SYNTHASE DMRL SYNTHASE LUMAZINE SYNTHASE"/>
    <property type="match status" value="1"/>
</dbReference>
<dbReference type="Pfam" id="PF00885">
    <property type="entry name" value="DMRL_synthase"/>
    <property type="match status" value="1"/>
</dbReference>
<dbReference type="SUPFAM" id="SSF52121">
    <property type="entry name" value="Lumazine synthase"/>
    <property type="match status" value="1"/>
</dbReference>
<proteinExistence type="inferred from homology"/>
<name>RISB_PYRNV</name>
<keyword id="KW-0686">Riboflavin biosynthesis</keyword>
<keyword id="KW-0808">Transferase</keyword>
<accession>B1Y9N5</accession>
<evidence type="ECO:0000255" key="1">
    <source>
        <dbReference type="HAMAP-Rule" id="MF_00178"/>
    </source>
</evidence>
<sequence length="150" mass="16401">MVRLALVVAEFNYDITSLMLQKAIEHARFLGAEVTYVVKVPGVYDIPMVLKDVVAKSDVDAVATLGAVIQGATKHDELVAQQAARKILDIAVEVDKPITLGIIGHGANRMQALERVEEYARRAVEAAVKLARRKKLLKDAKYSGATVYVE</sequence>